<geneLocation type="chloroplast"/>
<keyword id="KW-0150">Chloroplast</keyword>
<keyword id="KW-0934">Plastid</keyword>
<keyword id="KW-0687">Ribonucleoprotein</keyword>
<keyword id="KW-0689">Ribosomal protein</keyword>
<keyword id="KW-0694">RNA-binding</keyword>
<keyword id="KW-0699">rRNA-binding</keyword>
<feature type="chain" id="PRO_0000132542" description="Small ribosomal subunit protein uS4c">
    <location>
        <begin position="1" status="less than"/>
        <end position="183" status="greater than"/>
    </location>
</feature>
<feature type="domain" description="S4 RNA-binding">
    <location>
        <begin position="82"/>
        <end position="143"/>
    </location>
</feature>
<feature type="non-terminal residue">
    <location>
        <position position="1"/>
    </location>
</feature>
<feature type="non-terminal residue">
    <location>
        <position position="183"/>
    </location>
</feature>
<organism>
    <name type="scientific">Babiana stricta</name>
    <name type="common">Baboon flower</name>
    <name type="synonym">Gladiolus strictus</name>
    <dbReference type="NCBI Taxonomy" id="58942"/>
    <lineage>
        <taxon>Eukaryota</taxon>
        <taxon>Viridiplantae</taxon>
        <taxon>Streptophyta</taxon>
        <taxon>Embryophyta</taxon>
        <taxon>Tracheophyta</taxon>
        <taxon>Spermatophyta</taxon>
        <taxon>Magnoliopsida</taxon>
        <taxon>Liliopsida</taxon>
        <taxon>Asparagales</taxon>
        <taxon>Iridaceae</taxon>
        <taxon>Crocoideae</taxon>
        <taxon>Croceae</taxon>
        <taxon>Babiana</taxon>
    </lineage>
</organism>
<reference key="1">
    <citation type="journal article" date="1997" name="Plant Syst. Evol.">
        <title>Phylogenetic analysis of Iridaceae with parsimony and distance methods using the plastid gene rps4.</title>
        <authorList>
            <person name="Souza-Chies T.T."/>
            <person name="Bittar G."/>
            <person name="Nadot S."/>
            <person name="Carter L."/>
            <person name="Besin E."/>
            <person name="Lejeune B.P."/>
        </authorList>
    </citation>
    <scope>NUCLEOTIDE SEQUENCE [GENOMIC DNA]</scope>
</reference>
<comment type="function">
    <text evidence="1">One of the primary rRNA binding proteins, it binds directly to 16S rRNA where it nucleates assembly of the body of the 30S subunit.</text>
</comment>
<comment type="function">
    <text evidence="1">With S5 and S12 plays an important role in translational accuracy.</text>
</comment>
<comment type="subunit">
    <text evidence="1">Part of the 30S ribosomal subunit. Contacts protein S5. The interaction surface between S4 and S5 is involved in control of translational fidelity (By similarity).</text>
</comment>
<comment type="subcellular location">
    <subcellularLocation>
        <location>Plastid</location>
        <location>Chloroplast</location>
    </subcellularLocation>
</comment>
<comment type="similarity">
    <text evidence="2">Belongs to the universal ribosomal protein uS4 family.</text>
</comment>
<accession>O19995</accession>
<dbReference type="EMBL" id="Z68234">
    <property type="protein sequence ID" value="CAA92532.1"/>
    <property type="molecule type" value="Genomic_DNA"/>
</dbReference>
<dbReference type="SMR" id="O19995"/>
<dbReference type="GO" id="GO:0009507">
    <property type="term" value="C:chloroplast"/>
    <property type="evidence" value="ECO:0007669"/>
    <property type="project" value="UniProtKB-SubCell"/>
</dbReference>
<dbReference type="GO" id="GO:0015935">
    <property type="term" value="C:small ribosomal subunit"/>
    <property type="evidence" value="ECO:0007669"/>
    <property type="project" value="InterPro"/>
</dbReference>
<dbReference type="GO" id="GO:0019843">
    <property type="term" value="F:rRNA binding"/>
    <property type="evidence" value="ECO:0007669"/>
    <property type="project" value="UniProtKB-KW"/>
</dbReference>
<dbReference type="GO" id="GO:0003735">
    <property type="term" value="F:structural constituent of ribosome"/>
    <property type="evidence" value="ECO:0007669"/>
    <property type="project" value="InterPro"/>
</dbReference>
<dbReference type="GO" id="GO:0042274">
    <property type="term" value="P:ribosomal small subunit biogenesis"/>
    <property type="evidence" value="ECO:0007669"/>
    <property type="project" value="TreeGrafter"/>
</dbReference>
<dbReference type="GO" id="GO:0006412">
    <property type="term" value="P:translation"/>
    <property type="evidence" value="ECO:0007669"/>
    <property type="project" value="InterPro"/>
</dbReference>
<dbReference type="CDD" id="cd00165">
    <property type="entry name" value="S4"/>
    <property type="match status" value="1"/>
</dbReference>
<dbReference type="FunFam" id="1.10.1050.10:FF:000002">
    <property type="entry name" value="30S ribosomal protein S4, chloroplastic"/>
    <property type="match status" value="1"/>
</dbReference>
<dbReference type="FunFam" id="3.10.290.10:FF:000081">
    <property type="entry name" value="30S ribosomal protein S4, chloroplastic"/>
    <property type="match status" value="1"/>
</dbReference>
<dbReference type="Gene3D" id="1.10.1050.10">
    <property type="entry name" value="Ribosomal Protein S4 Delta 41, Chain A, domain 1"/>
    <property type="match status" value="1"/>
</dbReference>
<dbReference type="Gene3D" id="3.10.290.10">
    <property type="entry name" value="RNA-binding S4 domain"/>
    <property type="match status" value="1"/>
</dbReference>
<dbReference type="HAMAP" id="MF_01306_B">
    <property type="entry name" value="Ribosomal_uS4_B"/>
    <property type="match status" value="1"/>
</dbReference>
<dbReference type="InterPro" id="IPR022801">
    <property type="entry name" value="Ribosomal_uS4"/>
</dbReference>
<dbReference type="InterPro" id="IPR005709">
    <property type="entry name" value="Ribosomal_uS4_bac-type"/>
</dbReference>
<dbReference type="InterPro" id="IPR018079">
    <property type="entry name" value="Ribosomal_uS4_CS"/>
</dbReference>
<dbReference type="InterPro" id="IPR001912">
    <property type="entry name" value="Ribosomal_uS4_N"/>
</dbReference>
<dbReference type="InterPro" id="IPR002942">
    <property type="entry name" value="S4_RNA-bd"/>
</dbReference>
<dbReference type="InterPro" id="IPR036986">
    <property type="entry name" value="S4_RNA-bd_sf"/>
</dbReference>
<dbReference type="NCBIfam" id="NF003717">
    <property type="entry name" value="PRK05327.1"/>
    <property type="match status" value="1"/>
</dbReference>
<dbReference type="NCBIfam" id="TIGR01017">
    <property type="entry name" value="rpsD_bact"/>
    <property type="match status" value="1"/>
</dbReference>
<dbReference type="PANTHER" id="PTHR11831">
    <property type="entry name" value="30S 40S RIBOSOMAL PROTEIN"/>
    <property type="match status" value="1"/>
</dbReference>
<dbReference type="PANTHER" id="PTHR11831:SF4">
    <property type="entry name" value="SMALL RIBOSOMAL SUBUNIT PROTEIN US4M"/>
    <property type="match status" value="1"/>
</dbReference>
<dbReference type="Pfam" id="PF00163">
    <property type="entry name" value="Ribosomal_S4"/>
    <property type="match status" value="1"/>
</dbReference>
<dbReference type="Pfam" id="PF01479">
    <property type="entry name" value="S4"/>
    <property type="match status" value="1"/>
</dbReference>
<dbReference type="SMART" id="SM01390">
    <property type="entry name" value="Ribosomal_S4"/>
    <property type="match status" value="1"/>
</dbReference>
<dbReference type="SMART" id="SM00363">
    <property type="entry name" value="S4"/>
    <property type="match status" value="1"/>
</dbReference>
<dbReference type="SUPFAM" id="SSF55174">
    <property type="entry name" value="Alpha-L RNA-binding motif"/>
    <property type="match status" value="1"/>
</dbReference>
<dbReference type="PROSITE" id="PS00632">
    <property type="entry name" value="RIBOSOMAL_S4"/>
    <property type="match status" value="1"/>
</dbReference>
<dbReference type="PROSITE" id="PS50889">
    <property type="entry name" value="S4"/>
    <property type="match status" value="1"/>
</dbReference>
<evidence type="ECO:0000250" key="1"/>
<evidence type="ECO:0000305" key="2"/>
<gene>
    <name type="primary">rps4</name>
</gene>
<protein>
    <recommendedName>
        <fullName evidence="2">Small ribosomal subunit protein uS4c</fullName>
    </recommendedName>
    <alternativeName>
        <fullName>30S ribosomal protein S4, chloroplastic</fullName>
    </alternativeName>
</protein>
<name>RR4_BABST</name>
<proteinExistence type="inferred from homology"/>
<sequence length="183" mass="21138">RFKKIRRLGALPGLTSKRPRSGSDLKNQLRSGKRSQYRIRLEEKQKLRFHYGLTERQLLKYVHIAGKAKGSTGQILLQLLEMRLDNILFRLGMASTIPGARQLVNHRHILVNGRIVDIPSYRCKPRDIITTKNKQRSKALIQNFIASSPHQEELPNHLTIDPFQYKGLVNKIIDSKWIGLKIN</sequence>